<keyword id="KW-0240">DNA-directed RNA polymerase</keyword>
<keyword id="KW-0548">Nucleotidyltransferase</keyword>
<keyword id="KW-1185">Reference proteome</keyword>
<keyword id="KW-0804">Transcription</keyword>
<keyword id="KW-0808">Transferase</keyword>
<feature type="chain" id="PRO_0000237453" description="DNA-directed RNA polymerase subunit omega">
    <location>
        <begin position="1"/>
        <end position="77"/>
    </location>
</feature>
<name>RPOZ_NITV2</name>
<reference key="1">
    <citation type="journal article" date="2004" name="Nat. Biotechnol.">
        <title>The genome sequence of the anaerobic, sulfate-reducing bacterium Desulfovibrio vulgaris Hildenborough.</title>
        <authorList>
            <person name="Heidelberg J.F."/>
            <person name="Seshadri R."/>
            <person name="Haveman S.A."/>
            <person name="Hemme C.L."/>
            <person name="Paulsen I.T."/>
            <person name="Kolonay J.F."/>
            <person name="Eisen J.A."/>
            <person name="Ward N.L."/>
            <person name="Methe B.A."/>
            <person name="Brinkac L.M."/>
            <person name="Daugherty S.C."/>
            <person name="DeBoy R.T."/>
            <person name="Dodson R.J."/>
            <person name="Durkin A.S."/>
            <person name="Madupu R."/>
            <person name="Nelson W.C."/>
            <person name="Sullivan S.A."/>
            <person name="Fouts D.E."/>
            <person name="Haft D.H."/>
            <person name="Selengut J."/>
            <person name="Peterson J.D."/>
            <person name="Davidsen T.M."/>
            <person name="Zafar N."/>
            <person name="Zhou L."/>
            <person name="Radune D."/>
            <person name="Dimitrov G."/>
            <person name="Hance M."/>
            <person name="Tran K."/>
            <person name="Khouri H.M."/>
            <person name="Gill J."/>
            <person name="Utterback T.R."/>
            <person name="Feldblyum T.V."/>
            <person name="Wall J.D."/>
            <person name="Voordouw G."/>
            <person name="Fraser C.M."/>
        </authorList>
    </citation>
    <scope>NUCLEOTIDE SEQUENCE [LARGE SCALE GENOMIC DNA]</scope>
    <source>
        <strain>ATCC 29579 / DSM 644 / CCUG 34227 / NCIMB 8303 / VKM B-1760 / Hildenborough</strain>
    </source>
</reference>
<organism>
    <name type="scientific">Nitratidesulfovibrio vulgaris (strain ATCC 29579 / DSM 644 / CCUG 34227 / NCIMB 8303 / VKM B-1760 / Hildenborough)</name>
    <name type="common">Desulfovibrio vulgaris</name>
    <dbReference type="NCBI Taxonomy" id="882"/>
    <lineage>
        <taxon>Bacteria</taxon>
        <taxon>Pseudomonadati</taxon>
        <taxon>Thermodesulfobacteriota</taxon>
        <taxon>Desulfovibrionia</taxon>
        <taxon>Desulfovibrionales</taxon>
        <taxon>Desulfovibrionaceae</taxon>
        <taxon>Nitratidesulfovibrio</taxon>
    </lineage>
</organism>
<proteinExistence type="inferred from homology"/>
<sequence>MARITVEDCQKRIDNRFLLVQMAIKRVQQYREGYEPLVDSKNKEVVTALREIAAGKVMPEDLALYRPAEGEEMPVAE</sequence>
<gene>
    <name evidence="1" type="primary">rpoZ</name>
    <name type="ordered locus">DVU_3242</name>
</gene>
<dbReference type="EC" id="2.7.7.6" evidence="1"/>
<dbReference type="EMBL" id="AE017285">
    <property type="protein sequence ID" value="AAS97712.1"/>
    <property type="molecule type" value="Genomic_DNA"/>
</dbReference>
<dbReference type="RefSeq" id="WP_010940500.1">
    <property type="nucleotide sequence ID" value="NC_002937.3"/>
</dbReference>
<dbReference type="RefSeq" id="YP_012452.1">
    <property type="nucleotide sequence ID" value="NC_002937.3"/>
</dbReference>
<dbReference type="SMR" id="Q725M7"/>
<dbReference type="IntAct" id="Q725M7">
    <property type="interactions" value="2"/>
</dbReference>
<dbReference type="STRING" id="882.DVU_3242"/>
<dbReference type="PaxDb" id="882-DVU_3242"/>
<dbReference type="EnsemblBacteria" id="AAS97712">
    <property type="protein sequence ID" value="AAS97712"/>
    <property type="gene ID" value="DVU_3242"/>
</dbReference>
<dbReference type="KEGG" id="dvu:DVU_3242"/>
<dbReference type="PATRIC" id="fig|882.5.peg.2949"/>
<dbReference type="eggNOG" id="COG1758">
    <property type="taxonomic scope" value="Bacteria"/>
</dbReference>
<dbReference type="HOGENOM" id="CLU_125406_5_1_7"/>
<dbReference type="OrthoDB" id="9796300at2"/>
<dbReference type="PhylomeDB" id="Q725M7"/>
<dbReference type="Proteomes" id="UP000002194">
    <property type="component" value="Chromosome"/>
</dbReference>
<dbReference type="GO" id="GO:0000428">
    <property type="term" value="C:DNA-directed RNA polymerase complex"/>
    <property type="evidence" value="ECO:0007669"/>
    <property type="project" value="UniProtKB-KW"/>
</dbReference>
<dbReference type="GO" id="GO:0003677">
    <property type="term" value="F:DNA binding"/>
    <property type="evidence" value="ECO:0007669"/>
    <property type="project" value="UniProtKB-UniRule"/>
</dbReference>
<dbReference type="GO" id="GO:0003899">
    <property type="term" value="F:DNA-directed RNA polymerase activity"/>
    <property type="evidence" value="ECO:0007669"/>
    <property type="project" value="UniProtKB-UniRule"/>
</dbReference>
<dbReference type="GO" id="GO:0006351">
    <property type="term" value="P:DNA-templated transcription"/>
    <property type="evidence" value="ECO:0007669"/>
    <property type="project" value="UniProtKB-UniRule"/>
</dbReference>
<dbReference type="Gene3D" id="3.90.940.10">
    <property type="match status" value="1"/>
</dbReference>
<dbReference type="HAMAP" id="MF_00366">
    <property type="entry name" value="RNApol_bact_RpoZ"/>
    <property type="match status" value="1"/>
</dbReference>
<dbReference type="InterPro" id="IPR003716">
    <property type="entry name" value="DNA-dir_RNA_pol_omega"/>
</dbReference>
<dbReference type="InterPro" id="IPR006110">
    <property type="entry name" value="Pol_omega/Rpo6/RPB6"/>
</dbReference>
<dbReference type="InterPro" id="IPR036161">
    <property type="entry name" value="RPB6/omega-like_sf"/>
</dbReference>
<dbReference type="NCBIfam" id="TIGR00690">
    <property type="entry name" value="rpoZ"/>
    <property type="match status" value="1"/>
</dbReference>
<dbReference type="PANTHER" id="PTHR34476">
    <property type="entry name" value="DNA-DIRECTED RNA POLYMERASE SUBUNIT OMEGA"/>
    <property type="match status" value="1"/>
</dbReference>
<dbReference type="PANTHER" id="PTHR34476:SF1">
    <property type="entry name" value="DNA-DIRECTED RNA POLYMERASE SUBUNIT OMEGA"/>
    <property type="match status" value="1"/>
</dbReference>
<dbReference type="Pfam" id="PF01192">
    <property type="entry name" value="RNA_pol_Rpb6"/>
    <property type="match status" value="1"/>
</dbReference>
<dbReference type="SMART" id="SM01409">
    <property type="entry name" value="RNA_pol_Rpb6"/>
    <property type="match status" value="1"/>
</dbReference>
<dbReference type="SUPFAM" id="SSF63562">
    <property type="entry name" value="RPB6/omega subunit-like"/>
    <property type="match status" value="1"/>
</dbReference>
<evidence type="ECO:0000255" key="1">
    <source>
        <dbReference type="HAMAP-Rule" id="MF_00366"/>
    </source>
</evidence>
<protein>
    <recommendedName>
        <fullName evidence="1">DNA-directed RNA polymerase subunit omega</fullName>
        <shortName evidence="1">RNAP omega subunit</shortName>
        <ecNumber evidence="1">2.7.7.6</ecNumber>
    </recommendedName>
    <alternativeName>
        <fullName evidence="1">RNA polymerase omega subunit</fullName>
    </alternativeName>
    <alternativeName>
        <fullName evidence="1">Transcriptase subunit omega</fullName>
    </alternativeName>
</protein>
<comment type="function">
    <text evidence="1">Promotes RNA polymerase assembly. Latches the N- and C-terminal regions of the beta' subunit thereby facilitating its interaction with the beta and alpha subunits.</text>
</comment>
<comment type="catalytic activity">
    <reaction evidence="1">
        <text>RNA(n) + a ribonucleoside 5'-triphosphate = RNA(n+1) + diphosphate</text>
        <dbReference type="Rhea" id="RHEA:21248"/>
        <dbReference type="Rhea" id="RHEA-COMP:14527"/>
        <dbReference type="Rhea" id="RHEA-COMP:17342"/>
        <dbReference type="ChEBI" id="CHEBI:33019"/>
        <dbReference type="ChEBI" id="CHEBI:61557"/>
        <dbReference type="ChEBI" id="CHEBI:140395"/>
        <dbReference type="EC" id="2.7.7.6"/>
    </reaction>
</comment>
<comment type="subunit">
    <text evidence="1">The RNAP catalytic core consists of 2 alpha, 1 beta, 1 beta' and 1 omega subunit. When a sigma factor is associated with the core the holoenzyme is formed, which can initiate transcription.</text>
</comment>
<comment type="similarity">
    <text evidence="1">Belongs to the RNA polymerase subunit omega family.</text>
</comment>
<accession>Q725M7</accession>